<evidence type="ECO:0000255" key="1">
    <source>
        <dbReference type="HAMAP-Rule" id="MF_01350"/>
    </source>
</evidence>
<protein>
    <recommendedName>
        <fullName evidence="1">NADH-quinone oxidoreductase subunit H</fullName>
        <ecNumber evidence="1">7.1.1.-</ecNumber>
    </recommendedName>
    <alternativeName>
        <fullName evidence="1">NADH dehydrogenase I subunit H</fullName>
    </alternativeName>
    <alternativeName>
        <fullName evidence="1">NDH-1 subunit H</fullName>
    </alternativeName>
</protein>
<gene>
    <name evidence="1" type="primary">nuoH</name>
    <name type="ordered locus">bll4910</name>
</gene>
<proteinExistence type="inferred from homology"/>
<comment type="function">
    <text evidence="1">NDH-1 shuttles electrons from NADH, via FMN and iron-sulfur (Fe-S) centers, to quinones in the respiratory chain. The immediate electron acceptor for the enzyme in this species is believed to be ubiquinone. Couples the redox reaction to proton translocation (for every two electrons transferred, four hydrogen ions are translocated across the cytoplasmic membrane), and thus conserves the redox energy in a proton gradient. This subunit may bind ubiquinone.</text>
</comment>
<comment type="catalytic activity">
    <reaction evidence="1">
        <text>a quinone + NADH + 5 H(+)(in) = a quinol + NAD(+) + 4 H(+)(out)</text>
        <dbReference type="Rhea" id="RHEA:57888"/>
        <dbReference type="ChEBI" id="CHEBI:15378"/>
        <dbReference type="ChEBI" id="CHEBI:24646"/>
        <dbReference type="ChEBI" id="CHEBI:57540"/>
        <dbReference type="ChEBI" id="CHEBI:57945"/>
        <dbReference type="ChEBI" id="CHEBI:132124"/>
    </reaction>
</comment>
<comment type="subunit">
    <text evidence="1">NDH-1 is composed of 14 different subunits. Subunits NuoA, H, J, K, L, M, N constitute the membrane sector of the complex.</text>
</comment>
<comment type="subcellular location">
    <subcellularLocation>
        <location evidence="1">Cell inner membrane</location>
        <topology evidence="1">Multi-pass membrane protein</topology>
    </subcellularLocation>
</comment>
<comment type="similarity">
    <text evidence="1">Belongs to the complex I subunit 1 family.</text>
</comment>
<dbReference type="EC" id="7.1.1.-" evidence="1"/>
<dbReference type="EMBL" id="BA000040">
    <property type="protein sequence ID" value="BAC50175.1"/>
    <property type="molecule type" value="Genomic_DNA"/>
</dbReference>
<dbReference type="RefSeq" id="NP_771550.1">
    <property type="nucleotide sequence ID" value="NC_004463.1"/>
</dbReference>
<dbReference type="RefSeq" id="WP_011087676.1">
    <property type="nucleotide sequence ID" value="NC_004463.1"/>
</dbReference>
<dbReference type="SMR" id="Q89KJ5"/>
<dbReference type="FunCoup" id="Q89KJ5">
    <property type="interactions" value="255"/>
</dbReference>
<dbReference type="STRING" id="224911.AAV28_21875"/>
<dbReference type="EnsemblBacteria" id="BAC50175">
    <property type="protein sequence ID" value="BAC50175"/>
    <property type="gene ID" value="BAC50175"/>
</dbReference>
<dbReference type="GeneID" id="46491915"/>
<dbReference type="KEGG" id="bja:bll4910"/>
<dbReference type="PATRIC" id="fig|224911.5.peg.4995"/>
<dbReference type="eggNOG" id="COG1005">
    <property type="taxonomic scope" value="Bacteria"/>
</dbReference>
<dbReference type="HOGENOM" id="CLU_015134_0_1_5"/>
<dbReference type="InParanoid" id="Q89KJ5"/>
<dbReference type="OrthoDB" id="9803734at2"/>
<dbReference type="PhylomeDB" id="Q89KJ5"/>
<dbReference type="Proteomes" id="UP000002526">
    <property type="component" value="Chromosome"/>
</dbReference>
<dbReference type="GO" id="GO:0005886">
    <property type="term" value="C:plasma membrane"/>
    <property type="evidence" value="ECO:0007669"/>
    <property type="project" value="UniProtKB-SubCell"/>
</dbReference>
<dbReference type="GO" id="GO:0016655">
    <property type="term" value="F:oxidoreductase activity, acting on NAD(P)H, quinone or similar compound as acceptor"/>
    <property type="evidence" value="ECO:0007669"/>
    <property type="project" value="UniProtKB-UniRule"/>
</dbReference>
<dbReference type="GO" id="GO:0048038">
    <property type="term" value="F:quinone binding"/>
    <property type="evidence" value="ECO:0007669"/>
    <property type="project" value="UniProtKB-KW"/>
</dbReference>
<dbReference type="GO" id="GO:0009060">
    <property type="term" value="P:aerobic respiration"/>
    <property type="evidence" value="ECO:0000318"/>
    <property type="project" value="GO_Central"/>
</dbReference>
<dbReference type="HAMAP" id="MF_01350">
    <property type="entry name" value="NDH1_NuoH"/>
    <property type="match status" value="1"/>
</dbReference>
<dbReference type="InterPro" id="IPR001694">
    <property type="entry name" value="NADH_UbQ_OxRdtase_su1/FPO"/>
</dbReference>
<dbReference type="InterPro" id="IPR018086">
    <property type="entry name" value="NADH_UbQ_OxRdtase_su1_CS"/>
</dbReference>
<dbReference type="NCBIfam" id="NF004745">
    <property type="entry name" value="PRK06076.1-6"/>
    <property type="match status" value="1"/>
</dbReference>
<dbReference type="PANTHER" id="PTHR11432">
    <property type="entry name" value="NADH DEHYDROGENASE SUBUNIT 1"/>
    <property type="match status" value="1"/>
</dbReference>
<dbReference type="PANTHER" id="PTHR11432:SF3">
    <property type="entry name" value="NADH-UBIQUINONE OXIDOREDUCTASE CHAIN 1"/>
    <property type="match status" value="1"/>
</dbReference>
<dbReference type="Pfam" id="PF00146">
    <property type="entry name" value="NADHdh"/>
    <property type="match status" value="1"/>
</dbReference>
<dbReference type="PROSITE" id="PS00668">
    <property type="entry name" value="COMPLEX1_ND1_2"/>
    <property type="match status" value="1"/>
</dbReference>
<name>NUOH_BRADU</name>
<keyword id="KW-0997">Cell inner membrane</keyword>
<keyword id="KW-1003">Cell membrane</keyword>
<keyword id="KW-0472">Membrane</keyword>
<keyword id="KW-0520">NAD</keyword>
<keyword id="KW-0874">Quinone</keyword>
<keyword id="KW-1185">Reference proteome</keyword>
<keyword id="KW-1278">Translocase</keyword>
<keyword id="KW-0812">Transmembrane</keyword>
<keyword id="KW-1133">Transmembrane helix</keyword>
<keyword id="KW-0830">Ubiquinone</keyword>
<reference key="1">
    <citation type="journal article" date="2002" name="DNA Res.">
        <title>Complete genomic sequence of nitrogen-fixing symbiotic bacterium Bradyrhizobium japonicum USDA110.</title>
        <authorList>
            <person name="Kaneko T."/>
            <person name="Nakamura Y."/>
            <person name="Sato S."/>
            <person name="Minamisawa K."/>
            <person name="Uchiumi T."/>
            <person name="Sasamoto S."/>
            <person name="Watanabe A."/>
            <person name="Idesawa K."/>
            <person name="Iriguchi M."/>
            <person name="Kawashima K."/>
            <person name="Kohara M."/>
            <person name="Matsumoto M."/>
            <person name="Shimpo S."/>
            <person name="Tsuruoka H."/>
            <person name="Wada T."/>
            <person name="Yamada M."/>
            <person name="Tabata S."/>
        </authorList>
    </citation>
    <scope>NUCLEOTIDE SEQUENCE [LARGE SCALE GENOMIC DNA]</scope>
    <source>
        <strain>JCM 10833 / BCRC 13528 / IAM 13628 / NBRC 14792 / USDA 110</strain>
    </source>
</reference>
<accession>Q89KJ5</accession>
<organism>
    <name type="scientific">Bradyrhizobium diazoefficiens (strain JCM 10833 / BCRC 13528 / IAM 13628 / NBRC 14792 / USDA 110)</name>
    <dbReference type="NCBI Taxonomy" id="224911"/>
    <lineage>
        <taxon>Bacteria</taxon>
        <taxon>Pseudomonadati</taxon>
        <taxon>Pseudomonadota</taxon>
        <taxon>Alphaproteobacteria</taxon>
        <taxon>Hyphomicrobiales</taxon>
        <taxon>Nitrobacteraceae</taxon>
        <taxon>Bradyrhizobium</taxon>
    </lineage>
</organism>
<sequence>MEFFESAFWTGFLWPLIIMVAESVLVLVVLLVAIAYILLADRKIWAAVQIRRGPNVVGPWGLLQSFADLLKFVLKEPIIPAGANKGVFLLAPLVSCVLALAAWAVIPTNLGWVISDINVGILFIFAISSLSIYGIIMAGWSSNSKYPFLAALRSAAQMVSYEVSIGFVIITVLLCAGTLNLSAVVEAQHVRGLASLIGLPQLTILNWYVWPLFPMFVVFYVSALAETNRPPFDLVEAESELVAGFMVEYGSTPYLLFMLGEYVAIVTMCAMATILFLGGWLPPVDLPPFNWVPGIIWFLLKVFFMFFLFAMAKAIVPRYRYDQLMRLGWKVFLPLSLAMVIVVAGVLHFAGIAPK</sequence>
<feature type="chain" id="PRO_0000244900" description="NADH-quinone oxidoreductase subunit H">
    <location>
        <begin position="1"/>
        <end position="355"/>
    </location>
</feature>
<feature type="transmembrane region" description="Helical" evidence="1">
    <location>
        <begin position="17"/>
        <end position="37"/>
    </location>
</feature>
<feature type="transmembrane region" description="Helical" evidence="1">
    <location>
        <begin position="86"/>
        <end position="106"/>
    </location>
</feature>
<feature type="transmembrane region" description="Helical" evidence="1">
    <location>
        <begin position="119"/>
        <end position="139"/>
    </location>
</feature>
<feature type="transmembrane region" description="Helical" evidence="1">
    <location>
        <begin position="165"/>
        <end position="185"/>
    </location>
</feature>
<feature type="transmembrane region" description="Helical" evidence="1">
    <location>
        <begin position="204"/>
        <end position="224"/>
    </location>
</feature>
<feature type="transmembrane region" description="Helical" evidence="1">
    <location>
        <begin position="262"/>
        <end position="282"/>
    </location>
</feature>
<feature type="transmembrane region" description="Helical" evidence="1">
    <location>
        <begin position="291"/>
        <end position="311"/>
    </location>
</feature>
<feature type="transmembrane region" description="Helical" evidence="1">
    <location>
        <begin position="332"/>
        <end position="352"/>
    </location>
</feature>